<comment type="function">
    <text evidence="1">Has antibacterial activity against Listeria monocytogenes.</text>
</comment>
<protein>
    <recommendedName>
        <fullName evidence="2">PCM7-4</fullName>
    </recommendedName>
</protein>
<dbReference type="GO" id="GO:0005525">
    <property type="term" value="F:GTP binding"/>
    <property type="evidence" value="ECO:0007669"/>
    <property type="project" value="InterPro"/>
</dbReference>
<dbReference type="GO" id="GO:0003924">
    <property type="term" value="F:GTPase activity"/>
    <property type="evidence" value="ECO:0007669"/>
    <property type="project" value="InterPro"/>
</dbReference>
<dbReference type="GO" id="GO:0003746">
    <property type="term" value="F:translation elongation factor activity"/>
    <property type="evidence" value="ECO:0007669"/>
    <property type="project" value="TreeGrafter"/>
</dbReference>
<dbReference type="GO" id="GO:1901605">
    <property type="term" value="P:alpha-amino acid metabolic process"/>
    <property type="evidence" value="ECO:0007669"/>
    <property type="project" value="UniProtKB-ARBA"/>
</dbReference>
<dbReference type="GO" id="GO:0042742">
    <property type="term" value="P:defense response to bacterium"/>
    <property type="evidence" value="ECO:0007669"/>
    <property type="project" value="UniProtKB-KW"/>
</dbReference>
<dbReference type="Gene3D" id="3.40.50.1100">
    <property type="match status" value="1"/>
</dbReference>
<dbReference type="Gene3D" id="3.40.50.300">
    <property type="entry name" value="P-loop containing nucleotide triphosphate hydrolases"/>
    <property type="match status" value="2"/>
</dbReference>
<dbReference type="Gene3D" id="2.40.30.10">
    <property type="entry name" value="Translation factors"/>
    <property type="match status" value="1"/>
</dbReference>
<dbReference type="InterPro" id="IPR050055">
    <property type="entry name" value="EF-Tu_GTPase"/>
</dbReference>
<dbReference type="InterPro" id="IPR027417">
    <property type="entry name" value="P-loop_NTPase"/>
</dbReference>
<dbReference type="InterPro" id="IPR000795">
    <property type="entry name" value="T_Tr_GTP-bd_dom"/>
</dbReference>
<dbReference type="InterPro" id="IPR036052">
    <property type="entry name" value="TrpB-like_PALP_sf"/>
</dbReference>
<dbReference type="PANTHER" id="PTHR43721:SF22">
    <property type="entry name" value="ELONGATION FACTOR TU, MITOCHONDRIAL"/>
    <property type="match status" value="1"/>
</dbReference>
<dbReference type="PANTHER" id="PTHR43721">
    <property type="entry name" value="ELONGATION FACTOR TU-RELATED"/>
    <property type="match status" value="1"/>
</dbReference>
<dbReference type="Pfam" id="PF00009">
    <property type="entry name" value="GTP_EFTU"/>
    <property type="match status" value="1"/>
</dbReference>
<dbReference type="SUPFAM" id="SSF52540">
    <property type="entry name" value="P-loop containing nucleoside triphosphate hydrolases"/>
    <property type="match status" value="1"/>
</dbReference>
<accession>C0HMC8</accession>
<keyword id="KW-0044">Antibiotic</keyword>
<keyword id="KW-0929">Antimicrobial</keyword>
<keyword id="KW-0903">Direct protein sequencing</keyword>
<sequence length="376" mass="40229">QANDLDYASLPDSVVEQVRTNGQLALEGDKGELGEQAILSLAQALDTYIPTPERAVTALDTMPSAVGYQPTLAEEMGVLQERYLADTANKGDLSNIPFGTVNLLAYNNYQAYLTMLGKTTDVTGNCELPEGVEMVMPGDNIKNPGVTKYLPTTSYSLPHVNVGTIGHVDHGKTTLTAALTRYLADLVDDAELLELVEMEVRDLLSTYDFPGDDTPIIIGSARVSAAASELAVQLKMAVVHDDTNPTSAAQTNAPWGLARLSSYWGLTLHLPNLTEEQGVTIDEDHPLFIYLPCGIGGAPGGAAYGLKNVFLGSSAGTTREVEHSDKPLHDISYAYLGDARQNWVMTAQTTQAIRLEPSATAGFAGPEFIVNSNQGR</sequence>
<feature type="chain" id="PRO_0000461491" description="PCM7-4">
    <location>
        <begin position="1"/>
        <end position="376"/>
    </location>
</feature>
<reference evidence="3" key="1">
    <citation type="submission" date="2024-08" db="UniProtKB">
        <authorList>
            <person name="Haotian M."/>
            <person name="Yuexia D."/>
            <person name="Jinju P."/>
            <person name="Yang L."/>
            <person name="Ruixue P."/>
            <person name="Yuner L."/>
            <person name="Yining Z."/>
            <person name="Xiaohui Z."/>
            <person name="Yi M."/>
        </authorList>
    </citation>
    <scope>PROTEIN SEQUENCE</scope>
    <scope>FUNCTION</scope>
</reference>
<proteinExistence type="evidence at protein level"/>
<evidence type="ECO:0000269" key="1">
    <source ref="1"/>
</evidence>
<evidence type="ECO:0000303" key="2">
    <source ref="1"/>
</evidence>
<evidence type="ECO:0000305" key="3"/>
<organism>
    <name type="scientific">Bacillus velezensis</name>
    <dbReference type="NCBI Taxonomy" id="492670"/>
    <lineage>
        <taxon>Bacteria</taxon>
        <taxon>Bacillati</taxon>
        <taxon>Bacillota</taxon>
        <taxon>Bacilli</taxon>
        <taxon>Bacillales</taxon>
        <taxon>Bacillaceae</taxon>
        <taxon>Bacillus</taxon>
        <taxon>Bacillus amyloliquefaciens group</taxon>
    </lineage>
</organism>
<name>PCM74_BACVE</name>